<proteinExistence type="inferred from homology"/>
<name>TGT_NITEC</name>
<gene>
    <name evidence="1" type="primary">tgt</name>
    <name type="ordered locus">Neut_1431</name>
</gene>
<feature type="chain" id="PRO_1000016818" description="Queuine tRNA-ribosyltransferase">
    <location>
        <begin position="1"/>
        <end position="361"/>
    </location>
</feature>
<feature type="region of interest" description="RNA binding" evidence="1">
    <location>
        <begin position="243"/>
        <end position="249"/>
    </location>
</feature>
<feature type="region of interest" description="RNA binding; important for wobble base 34 recognition" evidence="1">
    <location>
        <begin position="267"/>
        <end position="271"/>
    </location>
</feature>
<feature type="active site" description="Proton acceptor" evidence="1">
    <location>
        <position position="89"/>
    </location>
</feature>
<feature type="active site" description="Nucleophile" evidence="1">
    <location>
        <position position="262"/>
    </location>
</feature>
<feature type="binding site" evidence="1">
    <location>
        <begin position="89"/>
        <end position="93"/>
    </location>
    <ligand>
        <name>substrate</name>
    </ligand>
</feature>
<feature type="binding site" evidence="1">
    <location>
        <position position="143"/>
    </location>
    <ligand>
        <name>substrate</name>
    </ligand>
</feature>
<feature type="binding site" evidence="1">
    <location>
        <position position="185"/>
    </location>
    <ligand>
        <name>substrate</name>
    </ligand>
</feature>
<feature type="binding site" evidence="1">
    <location>
        <position position="212"/>
    </location>
    <ligand>
        <name>substrate</name>
    </ligand>
</feature>
<feature type="binding site" evidence="1">
    <location>
        <position position="300"/>
    </location>
    <ligand>
        <name>Zn(2+)</name>
        <dbReference type="ChEBI" id="CHEBI:29105"/>
    </ligand>
</feature>
<feature type="binding site" evidence="1">
    <location>
        <position position="302"/>
    </location>
    <ligand>
        <name>Zn(2+)</name>
        <dbReference type="ChEBI" id="CHEBI:29105"/>
    </ligand>
</feature>
<feature type="binding site" evidence="1">
    <location>
        <position position="305"/>
    </location>
    <ligand>
        <name>Zn(2+)</name>
        <dbReference type="ChEBI" id="CHEBI:29105"/>
    </ligand>
</feature>
<feature type="binding site" evidence="1">
    <location>
        <position position="331"/>
    </location>
    <ligand>
        <name>Zn(2+)</name>
        <dbReference type="ChEBI" id="CHEBI:29105"/>
    </ligand>
</feature>
<protein>
    <recommendedName>
        <fullName evidence="1">Queuine tRNA-ribosyltransferase</fullName>
        <ecNumber evidence="1">2.4.2.29</ecNumber>
    </recommendedName>
    <alternativeName>
        <fullName evidence="1">Guanine insertion enzyme</fullName>
    </alternativeName>
    <alternativeName>
        <fullName evidence="1">tRNA-guanine transglycosylase</fullName>
    </alternativeName>
</protein>
<organism>
    <name type="scientific">Nitrosomonas eutropha (strain DSM 101675 / C91 / Nm57)</name>
    <dbReference type="NCBI Taxonomy" id="335283"/>
    <lineage>
        <taxon>Bacteria</taxon>
        <taxon>Pseudomonadati</taxon>
        <taxon>Pseudomonadota</taxon>
        <taxon>Betaproteobacteria</taxon>
        <taxon>Nitrosomonadales</taxon>
        <taxon>Nitrosomonadaceae</taxon>
        <taxon>Nitrosomonas</taxon>
    </lineage>
</organism>
<keyword id="KW-0328">Glycosyltransferase</keyword>
<keyword id="KW-0479">Metal-binding</keyword>
<keyword id="KW-0671">Queuosine biosynthesis</keyword>
<keyword id="KW-0808">Transferase</keyword>
<keyword id="KW-0819">tRNA processing</keyword>
<keyword id="KW-0862">Zinc</keyword>
<comment type="function">
    <text evidence="1">Catalyzes the base-exchange of a guanine (G) residue with the queuine precursor 7-aminomethyl-7-deazaguanine (PreQ1) at position 34 (anticodon wobble position) in tRNAs with GU(N) anticodons (tRNA-Asp, -Asn, -His and -Tyr). Catalysis occurs through a double-displacement mechanism. The nucleophile active site attacks the C1' of nucleotide 34 to detach the guanine base from the RNA, forming a covalent enzyme-RNA intermediate. The proton acceptor active site deprotonates the incoming PreQ1, allowing a nucleophilic attack on the C1' of the ribose to form the product. After dissociation, two additional enzymatic reactions on the tRNA convert PreQ1 to queuine (Q), resulting in the hypermodified nucleoside queuosine (7-(((4,5-cis-dihydroxy-2-cyclopenten-1-yl)amino)methyl)-7-deazaguanosine).</text>
</comment>
<comment type="catalytic activity">
    <reaction evidence="1">
        <text>7-aminomethyl-7-carbaguanine + guanosine(34) in tRNA = 7-aminomethyl-7-carbaguanosine(34) in tRNA + guanine</text>
        <dbReference type="Rhea" id="RHEA:24104"/>
        <dbReference type="Rhea" id="RHEA-COMP:10341"/>
        <dbReference type="Rhea" id="RHEA-COMP:10342"/>
        <dbReference type="ChEBI" id="CHEBI:16235"/>
        <dbReference type="ChEBI" id="CHEBI:58703"/>
        <dbReference type="ChEBI" id="CHEBI:74269"/>
        <dbReference type="ChEBI" id="CHEBI:82833"/>
        <dbReference type="EC" id="2.4.2.29"/>
    </reaction>
</comment>
<comment type="cofactor">
    <cofactor evidence="1">
        <name>Zn(2+)</name>
        <dbReference type="ChEBI" id="CHEBI:29105"/>
    </cofactor>
    <text evidence="1">Binds 1 zinc ion per subunit.</text>
</comment>
<comment type="pathway">
    <text evidence="1">tRNA modification; tRNA-queuosine biosynthesis.</text>
</comment>
<comment type="subunit">
    <text evidence="1">Homodimer. Within each dimer, one monomer is responsible for RNA recognition and catalysis, while the other monomer binds to the replacement base PreQ1.</text>
</comment>
<comment type="similarity">
    <text evidence="1">Belongs to the queuine tRNA-ribosyltransferase family.</text>
</comment>
<dbReference type="EC" id="2.4.2.29" evidence="1"/>
<dbReference type="EMBL" id="CP000450">
    <property type="protein sequence ID" value="ABI59677.1"/>
    <property type="molecule type" value="Genomic_DNA"/>
</dbReference>
<dbReference type="RefSeq" id="WP_011634483.1">
    <property type="nucleotide sequence ID" value="NC_008344.1"/>
</dbReference>
<dbReference type="SMR" id="Q0AG55"/>
<dbReference type="STRING" id="335283.Neut_1431"/>
<dbReference type="KEGG" id="net:Neut_1431"/>
<dbReference type="eggNOG" id="COG0343">
    <property type="taxonomic scope" value="Bacteria"/>
</dbReference>
<dbReference type="HOGENOM" id="CLU_022060_0_1_4"/>
<dbReference type="OrthoDB" id="9805417at2"/>
<dbReference type="UniPathway" id="UPA00392"/>
<dbReference type="Proteomes" id="UP000001966">
    <property type="component" value="Chromosome"/>
</dbReference>
<dbReference type="GO" id="GO:0005829">
    <property type="term" value="C:cytosol"/>
    <property type="evidence" value="ECO:0007669"/>
    <property type="project" value="TreeGrafter"/>
</dbReference>
<dbReference type="GO" id="GO:0046872">
    <property type="term" value="F:metal ion binding"/>
    <property type="evidence" value="ECO:0007669"/>
    <property type="project" value="UniProtKB-KW"/>
</dbReference>
<dbReference type="GO" id="GO:0008479">
    <property type="term" value="F:tRNA-guanosine(34) queuine transglycosylase activity"/>
    <property type="evidence" value="ECO:0007669"/>
    <property type="project" value="UniProtKB-UniRule"/>
</dbReference>
<dbReference type="GO" id="GO:0008616">
    <property type="term" value="P:queuosine biosynthetic process"/>
    <property type="evidence" value="ECO:0007669"/>
    <property type="project" value="UniProtKB-UniRule"/>
</dbReference>
<dbReference type="GO" id="GO:0002099">
    <property type="term" value="P:tRNA wobble guanine modification"/>
    <property type="evidence" value="ECO:0007669"/>
    <property type="project" value="TreeGrafter"/>
</dbReference>
<dbReference type="GO" id="GO:0101030">
    <property type="term" value="P:tRNA-guanine transglycosylation"/>
    <property type="evidence" value="ECO:0007669"/>
    <property type="project" value="InterPro"/>
</dbReference>
<dbReference type="FunFam" id="3.20.20.105:FF:000001">
    <property type="entry name" value="Queuine tRNA-ribosyltransferase"/>
    <property type="match status" value="1"/>
</dbReference>
<dbReference type="Gene3D" id="3.20.20.105">
    <property type="entry name" value="Queuine tRNA-ribosyltransferase-like"/>
    <property type="match status" value="1"/>
</dbReference>
<dbReference type="HAMAP" id="MF_00168">
    <property type="entry name" value="Q_tRNA_Tgt"/>
    <property type="match status" value="1"/>
</dbReference>
<dbReference type="InterPro" id="IPR050076">
    <property type="entry name" value="ArchSynthase1/Queuine_TRR"/>
</dbReference>
<dbReference type="InterPro" id="IPR004803">
    <property type="entry name" value="TGT"/>
</dbReference>
<dbReference type="InterPro" id="IPR036511">
    <property type="entry name" value="TGT-like_sf"/>
</dbReference>
<dbReference type="InterPro" id="IPR002616">
    <property type="entry name" value="tRNA_ribo_trans-like"/>
</dbReference>
<dbReference type="NCBIfam" id="TIGR00430">
    <property type="entry name" value="Q_tRNA_tgt"/>
    <property type="match status" value="1"/>
</dbReference>
<dbReference type="NCBIfam" id="TIGR00449">
    <property type="entry name" value="tgt_general"/>
    <property type="match status" value="1"/>
</dbReference>
<dbReference type="PANTHER" id="PTHR46499">
    <property type="entry name" value="QUEUINE TRNA-RIBOSYLTRANSFERASE"/>
    <property type="match status" value="1"/>
</dbReference>
<dbReference type="PANTHER" id="PTHR46499:SF1">
    <property type="entry name" value="QUEUINE TRNA-RIBOSYLTRANSFERASE"/>
    <property type="match status" value="1"/>
</dbReference>
<dbReference type="Pfam" id="PF01702">
    <property type="entry name" value="TGT"/>
    <property type="match status" value="1"/>
</dbReference>
<dbReference type="SUPFAM" id="SSF51713">
    <property type="entry name" value="tRNA-guanine transglycosylase"/>
    <property type="match status" value="1"/>
</dbReference>
<accession>Q0AG55</accession>
<reference key="1">
    <citation type="journal article" date="2007" name="Environ. Microbiol.">
        <title>Whole-genome analysis of the ammonia-oxidizing bacterium, Nitrosomonas eutropha C91: implications for niche adaptation.</title>
        <authorList>
            <person name="Stein L.Y."/>
            <person name="Arp D.J."/>
            <person name="Berube P.M."/>
            <person name="Chain P.S."/>
            <person name="Hauser L."/>
            <person name="Jetten M.S."/>
            <person name="Klotz M.G."/>
            <person name="Larimer F.W."/>
            <person name="Norton J.M."/>
            <person name="Op den Camp H.J.M."/>
            <person name="Shin M."/>
            <person name="Wei X."/>
        </authorList>
    </citation>
    <scope>NUCLEOTIDE SEQUENCE [LARGE SCALE GENOMIC DNA]</scope>
    <source>
        <strain>DSM 101675 / C91 / Nm57</strain>
    </source>
</reference>
<sequence>MKFQLHCHDHHARRGTLTLAHGMIETPAFMPVGTYGAVKGLSPDELQTLGAEIILGNTFHLWLRPGLEVIEAHGGLHRFMHWDGPILTDSGGFQVFSLGALRKISEEGVRFRSPVNGDTCFLTPEESMRIQRVLNSDIVMIFDECTPYPVDMQIAEDSMQLSLRWAERSKAAHAGNPNALFGIVQGGMYESLRDRSIAGLYNIGFDGYAIGGLSVGEPKLEMQRILSHTAPQLPVDKPRYLMGVGTPEDIVRAVEQGIDMFDCVLPTRNARNGWLYTSQGVLKLRNSRYRLDTSPPDENCDCYTCRHFTRAYLHHLQRTGEMLGARLNSLHNLHYYQRLMSDIRKAIEAGQFEQFACRFSG</sequence>
<evidence type="ECO:0000255" key="1">
    <source>
        <dbReference type="HAMAP-Rule" id="MF_00168"/>
    </source>
</evidence>